<name>TGRE1_DICDI</name>
<reference key="1">
    <citation type="journal article" date="2009" name="Curr. Biol.">
        <title>Polymorphic members of the lag gene family mediate kin discrimination in Dictyostelium.</title>
        <authorList>
            <person name="Benabentos R."/>
            <person name="Hirose S."/>
            <person name="Sucgang R."/>
            <person name="Curk T."/>
            <person name="Katoh M."/>
            <person name="Ostrowski E.A."/>
            <person name="Strassmann J.E."/>
            <person name="Queller D.C."/>
            <person name="Zupan B."/>
            <person name="Shaulsky G."/>
            <person name="Kuspa A."/>
        </authorList>
    </citation>
    <scope>NUCLEOTIDE SEQUENCE [GENOMIC DNA]</scope>
    <scope>DEVELOPMENTAL STAGE</scope>
    <source>
        <strain>AX4</strain>
    </source>
</reference>
<reference key="2">
    <citation type="journal article" date="2005" name="Nature">
        <title>The genome of the social amoeba Dictyostelium discoideum.</title>
        <authorList>
            <person name="Eichinger L."/>
            <person name="Pachebat J.A."/>
            <person name="Gloeckner G."/>
            <person name="Rajandream M.A."/>
            <person name="Sucgang R."/>
            <person name="Berriman M."/>
            <person name="Song J."/>
            <person name="Olsen R."/>
            <person name="Szafranski K."/>
            <person name="Xu Q."/>
            <person name="Tunggal B."/>
            <person name="Kummerfeld S."/>
            <person name="Madera M."/>
            <person name="Konfortov B.A."/>
            <person name="Rivero F."/>
            <person name="Bankier A.T."/>
            <person name="Lehmann R."/>
            <person name="Hamlin N."/>
            <person name="Davies R."/>
            <person name="Gaudet P."/>
            <person name="Fey P."/>
            <person name="Pilcher K."/>
            <person name="Chen G."/>
            <person name="Saunders D."/>
            <person name="Sodergren E.J."/>
            <person name="Davis P."/>
            <person name="Kerhornou A."/>
            <person name="Nie X."/>
            <person name="Hall N."/>
            <person name="Anjard C."/>
            <person name="Hemphill L."/>
            <person name="Bason N."/>
            <person name="Farbrother P."/>
            <person name="Desany B."/>
            <person name="Just E."/>
            <person name="Morio T."/>
            <person name="Rost R."/>
            <person name="Churcher C.M."/>
            <person name="Cooper J."/>
            <person name="Haydock S."/>
            <person name="van Driessche N."/>
            <person name="Cronin A."/>
            <person name="Goodhead I."/>
            <person name="Muzny D.M."/>
            <person name="Mourier T."/>
            <person name="Pain A."/>
            <person name="Lu M."/>
            <person name="Harper D."/>
            <person name="Lindsay R."/>
            <person name="Hauser H."/>
            <person name="James K.D."/>
            <person name="Quiles M."/>
            <person name="Madan Babu M."/>
            <person name="Saito T."/>
            <person name="Buchrieser C."/>
            <person name="Wardroper A."/>
            <person name="Felder M."/>
            <person name="Thangavelu M."/>
            <person name="Johnson D."/>
            <person name="Knights A."/>
            <person name="Loulseged H."/>
            <person name="Mungall K.L."/>
            <person name="Oliver K."/>
            <person name="Price C."/>
            <person name="Quail M.A."/>
            <person name="Urushihara H."/>
            <person name="Hernandez J."/>
            <person name="Rabbinowitsch E."/>
            <person name="Steffen D."/>
            <person name="Sanders M."/>
            <person name="Ma J."/>
            <person name="Kohara Y."/>
            <person name="Sharp S."/>
            <person name="Simmonds M.N."/>
            <person name="Spiegler S."/>
            <person name="Tivey A."/>
            <person name="Sugano S."/>
            <person name="White B."/>
            <person name="Walker D."/>
            <person name="Woodward J.R."/>
            <person name="Winckler T."/>
            <person name="Tanaka Y."/>
            <person name="Shaulsky G."/>
            <person name="Schleicher M."/>
            <person name="Weinstock G.M."/>
            <person name="Rosenthal A."/>
            <person name="Cox E.C."/>
            <person name="Chisholm R.L."/>
            <person name="Gibbs R.A."/>
            <person name="Loomis W.F."/>
            <person name="Platzer M."/>
            <person name="Kay R.R."/>
            <person name="Williams J.G."/>
            <person name="Dear P.H."/>
            <person name="Noegel A.A."/>
            <person name="Barrell B.G."/>
            <person name="Kuspa A."/>
        </authorList>
    </citation>
    <scope>NUCLEOTIDE SEQUENCE [LARGE SCALE GENOMIC DNA]</scope>
    <source>
        <strain>AX4</strain>
    </source>
</reference>
<keyword id="KW-1003">Cell membrane</keyword>
<keyword id="KW-0325">Glycoprotein</keyword>
<keyword id="KW-0472">Membrane</keyword>
<keyword id="KW-1185">Reference proteome</keyword>
<keyword id="KW-0677">Repeat</keyword>
<keyword id="KW-0732">Signal</keyword>
<keyword id="KW-0812">Transmembrane</keyword>
<keyword id="KW-1133">Transmembrane helix</keyword>
<comment type="subcellular location">
    <subcellularLocation>
        <location evidence="3">Cell membrane</location>
        <topology evidence="3">Single-pass type I membrane protein</topology>
    </subcellularLocation>
</comment>
<comment type="developmental stage">
    <text evidence="2">Developmentally regulated; with a peak of expression at 16 hours corresponding to the finger stage of development.</text>
</comment>
<organism>
    <name type="scientific">Dictyostelium discoideum</name>
    <name type="common">Social amoeba</name>
    <dbReference type="NCBI Taxonomy" id="44689"/>
    <lineage>
        <taxon>Eukaryota</taxon>
        <taxon>Amoebozoa</taxon>
        <taxon>Evosea</taxon>
        <taxon>Eumycetozoa</taxon>
        <taxon>Dictyostelia</taxon>
        <taxon>Dictyosteliales</taxon>
        <taxon>Dictyosteliaceae</taxon>
        <taxon>Dictyostelium</taxon>
    </lineage>
</organism>
<protein>
    <recommendedName>
        <fullName>Tiger protein E1</fullName>
    </recommendedName>
    <alternativeName>
        <fullName>Loose aggregate E1 protein</fullName>
    </alternativeName>
    <alternativeName>
        <fullName>Transmembrane, IPT, Ig, E-set, Repeat protein E1</fullName>
    </alternativeName>
</protein>
<dbReference type="EMBL" id="FJ374971">
    <property type="protein sequence ID" value="ACN54230.1"/>
    <property type="molecule type" value="Genomic_DNA"/>
</dbReference>
<dbReference type="EMBL" id="AAFI02000090">
    <property type="protein sequence ID" value="EAL64023.1"/>
    <property type="molecule type" value="Genomic_DNA"/>
</dbReference>
<dbReference type="RefSeq" id="XP_637528.1">
    <property type="nucleotide sequence ID" value="XM_632436.1"/>
</dbReference>
<dbReference type="FunCoup" id="Q54L75">
    <property type="interactions" value="1"/>
</dbReference>
<dbReference type="STRING" id="44689.Q54L75"/>
<dbReference type="GlyCosmos" id="Q54L75">
    <property type="glycosylation" value="20 sites, No reported glycans"/>
</dbReference>
<dbReference type="GlyGen" id="Q54L75">
    <property type="glycosylation" value="20 sites"/>
</dbReference>
<dbReference type="PaxDb" id="44689-DDB0233529"/>
<dbReference type="EnsemblProtists" id="EAL64023">
    <property type="protein sequence ID" value="EAL64023"/>
    <property type="gene ID" value="DDB_G0286851"/>
</dbReference>
<dbReference type="GeneID" id="8625826"/>
<dbReference type="KEGG" id="ddi:DDB_G0286851"/>
<dbReference type="dictyBase" id="DDB_G0286851">
    <property type="gene designation" value="tgrE1"/>
</dbReference>
<dbReference type="VEuPathDB" id="AmoebaDB:DDB_G0286851"/>
<dbReference type="eggNOG" id="ENOG502RI4S">
    <property type="taxonomic scope" value="Eukaryota"/>
</dbReference>
<dbReference type="HOGENOM" id="CLU_325834_0_0_1"/>
<dbReference type="InParanoid" id="Q54L75"/>
<dbReference type="OMA" id="EFRTISC"/>
<dbReference type="PhylomeDB" id="Q54L75"/>
<dbReference type="PRO" id="PR:Q54L75"/>
<dbReference type="Proteomes" id="UP000002195">
    <property type="component" value="Chromosome 4"/>
</dbReference>
<dbReference type="GO" id="GO:0005886">
    <property type="term" value="C:plasma membrane"/>
    <property type="evidence" value="ECO:0007669"/>
    <property type="project" value="UniProtKB-SubCell"/>
</dbReference>
<dbReference type="CDD" id="cd00603">
    <property type="entry name" value="IPT_PCSR"/>
    <property type="match status" value="1"/>
</dbReference>
<dbReference type="Gene3D" id="2.60.40.10">
    <property type="entry name" value="Immunoglobulins"/>
    <property type="match status" value="1"/>
</dbReference>
<dbReference type="InterPro" id="IPR052014">
    <property type="entry name" value="Dictyostelium_Tiger"/>
</dbReference>
<dbReference type="InterPro" id="IPR013783">
    <property type="entry name" value="Ig-like_fold"/>
</dbReference>
<dbReference type="InterPro" id="IPR014756">
    <property type="entry name" value="Ig_E-set"/>
</dbReference>
<dbReference type="InterPro" id="IPR002909">
    <property type="entry name" value="IPT_dom"/>
</dbReference>
<dbReference type="PANTHER" id="PTHR31341">
    <property type="entry name" value="IPT/TIG DOMAIN-CONTAINING PROTEIN-RELATED-RELATED"/>
    <property type="match status" value="1"/>
</dbReference>
<dbReference type="PANTHER" id="PTHR31341:SF18">
    <property type="entry name" value="IPT_TIG DOMAIN-CONTAINING PROTEIN-RELATED"/>
    <property type="match status" value="1"/>
</dbReference>
<dbReference type="Pfam" id="PF01833">
    <property type="entry name" value="TIG"/>
    <property type="match status" value="2"/>
</dbReference>
<dbReference type="SUPFAM" id="SSF81296">
    <property type="entry name" value="E set domains"/>
    <property type="match status" value="2"/>
</dbReference>
<sequence length="912" mass="100875">MKLKHLTIFLFIFIYRFLFVKSDCYLINNERPETKITKIRCDDQVISILLNPNNRTDATLEKDTDGKFYFDVVNFPYKDRLCDYTYDIYFLPEIPSLPSVPTIGGSVNFTYNYPCTSVYGRIKPLNIANKIVTPYNINLDQFTMRIQPGCGDLIINSGSRVIYNASYQTGDIPNKPTIDDQGNITIQGSNLYNTQIKINSNDPVENLNPTGNLDSTHSTIVFSLPESQYQGNWTIDVTICDVFYKSYLYTFLPIITVMEGVLNDNGGNLTFTGDHLSVNPSTTISGHFGGKPISCFAGTSKSVICSIPSRSEYGGSGYDVPLNVTIGKYTTNTIKISYDLPLIQGVSQRGTSQIFNVSGVYFSGVISMTIITGANIKTNILKKPTPTLEEPGFFIESNNTIFIFLPNNTQPGFMNLIVGDGGSKSFTSPRYNFKITPTITAGQSFKSNTIGGDLIISGIFMRTVDSDGRDVPLTVKSEPGGPICDPLKDGDGLSFTCVLKSGFGSSHTMNVYYNLLPVGSFVVSYNPPYLASSDQEKDGTIQINGNNLGESVSNSIITVVYLDGSRANGTVVESSHNLLTFQYPAGNKNTASYLFQLGDQISNMAGPFTLKPVIENNNPAVPCGGGMVTINGHYFFNYTKDTTTITIGKVPCNISSINVTTIECVILPNLKSLSPYYTSGSKPLIISSSNSATEKVYQSSITGYSNYTFAPPTITNTSDIDQTALITIYGTSFGDANLEILIDGKPCTQPEINIHTYSSLTCNVTNYDEMLKYNYSNTKFNISISVDGQYFIAQIFQFKYESTISYSENKSSGFPNEMYIGIVAIIIFLALIFFAIKTQVEKYIEERRARKAFRSVDNLRLKLREKHAAEIAKHYSFGYESAPKPNKSYFYDLGKKLSRLPLIRCCFKEHTD</sequence>
<feature type="signal peptide" evidence="1">
    <location>
        <begin position="1"/>
        <end position="22"/>
    </location>
</feature>
<feature type="chain" id="PRO_0000393400" description="Tiger protein E1">
    <location>
        <begin position="23"/>
        <end position="912"/>
    </location>
</feature>
<feature type="topological domain" description="Extracellular" evidence="1">
    <location>
        <begin position="23"/>
        <end position="815"/>
    </location>
</feature>
<feature type="transmembrane region" description="Helical" evidence="1">
    <location>
        <begin position="816"/>
        <end position="836"/>
    </location>
</feature>
<feature type="topological domain" description="Cytoplasmic" evidence="1">
    <location>
        <begin position="837"/>
        <end position="912"/>
    </location>
</feature>
<feature type="domain" description="IPT/TIG 1">
    <location>
        <begin position="532"/>
        <end position="609"/>
    </location>
</feature>
<feature type="domain" description="IPT/TIG 2">
    <location>
        <begin position="612"/>
        <end position="686"/>
    </location>
</feature>
<feature type="domain" description="IPT/TIG 3">
    <location>
        <begin position="715"/>
        <end position="796"/>
    </location>
</feature>
<feature type="glycosylation site" description="N-linked (GlcNAc...) asparagine" evidence="1">
    <location>
        <position position="54"/>
    </location>
</feature>
<feature type="glycosylation site" description="N-linked (GlcNAc...) asparagine" evidence="1">
    <location>
        <position position="108"/>
    </location>
</feature>
<feature type="glycosylation site" description="N-linked (GlcNAc...) asparagine" evidence="1">
    <location>
        <position position="164"/>
    </location>
</feature>
<feature type="glycosylation site" description="N-linked (GlcNAc...) asparagine" evidence="1">
    <location>
        <position position="183"/>
    </location>
</feature>
<feature type="glycosylation site" description="N-linked (GlcNAc...) asparagine" evidence="1">
    <location>
        <position position="232"/>
    </location>
</feature>
<feature type="glycosylation site" description="N-linked (GlcNAc...) asparagine" evidence="1">
    <location>
        <position position="268"/>
    </location>
</feature>
<feature type="glycosylation site" description="N-linked (GlcNAc...) asparagine" evidence="1">
    <location>
        <position position="323"/>
    </location>
</feature>
<feature type="glycosylation site" description="N-linked (GlcNAc...) asparagine" evidence="1">
    <location>
        <position position="356"/>
    </location>
</feature>
<feature type="glycosylation site" description="N-linked (GlcNAc...) asparagine" evidence="1">
    <location>
        <position position="398"/>
    </location>
</feature>
<feature type="glycosylation site" description="N-linked (GlcNAc...) asparagine" evidence="1">
    <location>
        <position position="407"/>
    </location>
</feature>
<feature type="glycosylation site" description="N-linked (GlcNAc...) asparagine" evidence="1">
    <location>
        <position position="568"/>
    </location>
</feature>
<feature type="glycosylation site" description="N-linked (GlcNAc...) asparagine" evidence="1">
    <location>
        <position position="637"/>
    </location>
</feature>
<feature type="glycosylation site" description="N-linked (GlcNAc...) asparagine" evidence="1">
    <location>
        <position position="653"/>
    </location>
</feature>
<feature type="glycosylation site" description="N-linked (GlcNAc...) asparagine" evidence="1">
    <location>
        <position position="658"/>
    </location>
</feature>
<feature type="glycosylation site" description="N-linked (GlcNAc...) asparagine" evidence="1">
    <location>
        <position position="706"/>
    </location>
</feature>
<feature type="glycosylation site" description="N-linked (GlcNAc...) asparagine" evidence="1">
    <location>
        <position position="716"/>
    </location>
</feature>
<feature type="glycosylation site" description="N-linked (GlcNAc...) asparagine" evidence="1">
    <location>
        <position position="763"/>
    </location>
</feature>
<feature type="glycosylation site" description="N-linked (GlcNAc...) asparagine" evidence="1">
    <location>
        <position position="774"/>
    </location>
</feature>
<feature type="glycosylation site" description="N-linked (GlcNAc...) asparagine" evidence="1">
    <location>
        <position position="781"/>
    </location>
</feature>
<feature type="glycosylation site" description="N-linked (GlcNAc...) asparagine" evidence="1">
    <location>
        <position position="809"/>
    </location>
</feature>
<gene>
    <name type="primary">tgrE1</name>
    <name type="synonym">lagE1</name>
    <name type="ORF">DDB_G0286851</name>
</gene>
<accession>Q54L75</accession>
<proteinExistence type="evidence at transcript level"/>
<evidence type="ECO:0000255" key="1"/>
<evidence type="ECO:0000269" key="2">
    <source>
    </source>
</evidence>
<evidence type="ECO:0000305" key="3"/>